<sequence length="2493" mass="271983">MLFTMQFTTRSTVASPEQQHQHQQRSISYSDIELGLERISSRDSNGSSNFTHRAYPPPLSQQYDDTSTNSFHSSQPDITASSSTLSSRLVSANYSRPRFEHAHTQPPTPDQDRSSSGSGSGSGSRSYFPANSHSDSLPGPSTHSISPSFDEDELRQIMSHIPANQATSSSDGDVGKAVQSANHQDISPFLFQSENAAPFSSSHSNRTSVNPSAASTASPSTSAATRTRPRGGTNASQYNTLDTSFGSIDRPGLSSSRSQYSLRPQTPPSASTSTSTLNGSKDTHASAVKKTRNPFGFLKKKSSAHSNASSNHPTRHDIGSVSSLSSRYGPNAAANVNPMRPPAWLDNHCTLANSNSPSSASLRSHYHQPPASSNPPPWQNPLVSRADSTPSAMSLEDEVEAEHHLKKDPRKRIKGVRHHLAKTTKPGEDADSARDPAFAAQSQSIEQEVELSLDMNFDQLDDFVDTNAARQRLQGSITESASPSEHRSPNGSEAGVYRSPSPSQTPIAERQTSVTSTVESPSHASEASLAPSGSLRTPSRTTASTSTSSASTVLSDRLPSQVNMLPRNSVPRLSLAEMQNYQSLRKLSNNLIDMSQTQNPSAMGASYRRGSIAAAQAPVDAPQLGVAPRTDSELSDRKDSVVSTHSMRSNHSGISPKTSYANLPSVIQERQKPATALPSAANWTSSITRDKTANGHADHAYQFPPATEYQSNLLLSVRKSSASSGQEPSSSWMAPDSWAVQPDKMRDYLRDDNVGEEEDDDDDQHQARAALATDGKRRGSSSGISSTHASSMFRTSSTDPFKKTASLAGSRRGTDDSVDPLTALPPLPGSKSVDEAAANKVDVLQQTNNLAQSALVQQQSQSQNHHQPSPNVRPTSRGGAGAHMFASAGASAAAAAAGKLGLHRPSKHRMNARPNTAGSVGATRPSTTTLGSTLSAEDDTSINGSIRRDGHPLKRSATANTNNATGTLPRNHFIRVYKTDGTFATLSCSLVSTANEVQTILARKSLTTESAAYRLFVRDKGSERPLGISDKPSQLQRRRLIQAGYTENDGLEDMGRDDLSYLLRFVFRPDSVPTFDSESIGHSEHTFQHLDLHSRNLEMVPIFLYKHADWIVSLDLSGNPMSDLPLDFVQLCSSLRTLRLSNLALKRIPQSVRHSETLTHLDVSNNRIVELAHVSLDLIPELMSLKVQNNRLFDLPSYFSSISTLRNLNISNNRFEEFPKVICDVPSLVDLDVSFNSITELPAEIANLINLERFILAGNELEKLPDSMSELVSLRTIDLRRNKVQDVSSLLGLPRLQNIQAESNNIKSFEATLGPQLTQVELGRNPLSKVRIAALTTCDLTSLDLSSTNMTRLEEGLFPQLPALVKLTLDGNQLVVLPDTLGDLKRLEMLSCSNNLLATLPESIGDLKALKELLVHNNNLKTLPQTLWLCESLAHINLSSNLLESFPAVPDIRTDASVGDAAAAAGTSAVIAARKGSTSSSLTHRSNTGGANGNINLSTPSEVFVAPLSLSLQKLRLGDNRLGDDVFSVLSELTSLEVLNLSFNEIFEIPDFSLQTLTKLRELYISGNQLSTIPSDDLVVLQELRILHLNCNKLTTLPTELGKLKKLANLDVGNNVLKYNIANWHYDWNWNMNPELRYLNLSGNTRLEIKTKLSDMGFTRKSNISDFSRLTSLRMLGLMDVTMPLHSNATPDESDNRRVRTSLSQVNGMAYGIADALGKHDNLSVIDLVIPTFRKDEGECIFGLFDGRGHGAHVGSRIAHHLAEWSGHRLSWEFQKHQNEMTAEPVSVPDALRRAFLRLQKDYADALINDGSRKLSEAHAEAAADVTRSSAPAIAAASNKHDWRAGASAILAYVVDHTLYIANAGDALAVMSRNGGTAHLISNKHEPFDRAEIERIRSAEGWVSLRGYVNDMLDVSRSFGYFHLFPIVNAAPAVTTVQLTDSDEFVIIANRTLWQYVSYQTAVDIARTQRNDPMIAAQKLRDFAISYGAEESIMVMVISVGDLFYRSDQRNGGGLNFASYKNSDAIQKAGRRFREELPGDRTLARLDREVAPPIGQVALVFTDIKNSTSLWETNNGMQTAMRLHNYLLRRQLRTIGGYEVKTEGDAFMVSFPSVSAALLWCFTVQQQLLQEDWPREILDSEDGKEVYDQSGELIHRGLSVRMGIHWGRPVCEADPITRRMDYFGPMVNRAARISGAADGGQILASKDVIKELQGLLGTFDESSTAGGAGGEGENLEKTEEELDEDAFRLLNPNVSRDVVLLRRMGFGLSQLGERRLKGLETPEMLWLVYPKQLAGRLEQAKTDDAPDAPTAQVYEPTVQLLDIEDVKQVGMLCLRLEYLSNSTVCPGIFAAKDEADRSQPSTPLDDNGRNPIDGHGTAVPLLSHQARRKGVEAMLTMHPELLIYSIRDDATDEELAGILDQLTTRIQNAVSSLMLNMLRDKTANGTKELGVDPGVLELLMGLLSQPPPRASTSALSLPSPRTSPRNRLLELVP</sequence>
<proteinExistence type="inferred from homology"/>
<name>CYAA_MYCMD</name>
<feature type="chain" id="PRO_0000195730" description="Adenylate cyclase">
    <location>
        <begin position="1"/>
        <end position="2493"/>
    </location>
</feature>
<feature type="domain" description="Ras-associating" evidence="4">
    <location>
        <begin position="970"/>
        <end position="1072"/>
    </location>
</feature>
<feature type="repeat" description="LRR 1">
    <location>
        <begin position="1086"/>
        <end position="1107"/>
    </location>
</feature>
<feature type="repeat" description="LRR 2">
    <location>
        <begin position="1110"/>
        <end position="1132"/>
    </location>
</feature>
<feature type="repeat" description="LRR 3">
    <location>
        <begin position="1134"/>
        <end position="1155"/>
    </location>
</feature>
<feature type="repeat" description="LRR 4">
    <location>
        <begin position="1157"/>
        <end position="1178"/>
    </location>
</feature>
<feature type="repeat" description="LRR 5">
    <location>
        <begin position="1181"/>
        <end position="1202"/>
    </location>
</feature>
<feature type="repeat" description="LRR 6">
    <location>
        <begin position="1204"/>
        <end position="1225"/>
    </location>
</feature>
<feature type="repeat" description="LRR 7">
    <location>
        <begin position="1227"/>
        <end position="1248"/>
    </location>
</feature>
<feature type="repeat" description="LRR 8">
    <location>
        <begin position="1250"/>
        <end position="1271"/>
    </location>
</feature>
<feature type="repeat" description="LRR 9">
    <location>
        <begin position="1273"/>
        <end position="1294"/>
    </location>
</feature>
<feature type="repeat" description="LRR 10">
    <location>
        <begin position="1295"/>
        <end position="1316"/>
    </location>
</feature>
<feature type="repeat" description="LRR 11">
    <location>
        <begin position="1317"/>
        <end position="1336"/>
    </location>
</feature>
<feature type="repeat" description="LRR 12">
    <location>
        <begin position="1339"/>
        <end position="1360"/>
    </location>
</feature>
<feature type="repeat" description="LRR 13">
    <location>
        <begin position="1363"/>
        <end position="1385"/>
    </location>
</feature>
<feature type="repeat" description="LRR 14">
    <location>
        <begin position="1386"/>
        <end position="1407"/>
    </location>
</feature>
<feature type="repeat" description="LRR 15">
    <location>
        <begin position="1409"/>
        <end position="1430"/>
    </location>
</feature>
<feature type="repeat" description="LRR 16">
    <location>
        <begin position="1432"/>
        <end position="1453"/>
    </location>
</feature>
<feature type="repeat" description="LRR 17">
    <location>
        <begin position="1511"/>
        <end position="1534"/>
    </location>
</feature>
<feature type="repeat" description="LRR 18">
    <location>
        <begin position="1535"/>
        <end position="1556"/>
    </location>
</feature>
<feature type="repeat" description="LRR 19">
    <location>
        <begin position="1559"/>
        <end position="1580"/>
    </location>
</feature>
<feature type="repeat" description="LRR 20">
    <location>
        <begin position="1583"/>
        <end position="1605"/>
    </location>
</feature>
<feature type="repeat" description="LRR 21">
    <location>
        <begin position="1606"/>
        <end position="1628"/>
    </location>
</feature>
<feature type="repeat" description="LRR 22">
    <location>
        <begin position="1635"/>
        <end position="1654"/>
    </location>
</feature>
<feature type="domain" description="PPM-type phosphatase" evidence="5">
    <location>
        <begin position="1710"/>
        <end position="2000"/>
    </location>
</feature>
<feature type="domain" description="Guanylate cyclase" evidence="3">
    <location>
        <begin position="2058"/>
        <end position="2194"/>
    </location>
</feature>
<feature type="region of interest" description="Disordered" evidence="6">
    <location>
        <begin position="1"/>
        <end position="85"/>
    </location>
</feature>
<feature type="region of interest" description="Disordered" evidence="6">
    <location>
        <begin position="99"/>
        <end position="148"/>
    </location>
</feature>
<feature type="region of interest" description="Disordered" evidence="6">
    <location>
        <begin position="197"/>
        <end position="325"/>
    </location>
</feature>
<feature type="region of interest" description="Disordered" evidence="6">
    <location>
        <begin position="355"/>
        <end position="444"/>
    </location>
</feature>
<feature type="region of interest" description="Disordered" evidence="6">
    <location>
        <begin position="475"/>
        <end position="565"/>
    </location>
</feature>
<feature type="region of interest" description="Disordered" evidence="6">
    <location>
        <begin position="616"/>
        <end position="660"/>
    </location>
</feature>
<feature type="region of interest" description="Disordered" evidence="6">
    <location>
        <begin position="753"/>
        <end position="832"/>
    </location>
</feature>
<feature type="region of interest" description="Disordered" evidence="6">
    <location>
        <begin position="854"/>
        <end position="882"/>
    </location>
</feature>
<feature type="region of interest" description="Disordered" evidence="6">
    <location>
        <begin position="904"/>
        <end position="967"/>
    </location>
</feature>
<feature type="region of interest" description="Disordered" evidence="6">
    <location>
        <begin position="2220"/>
        <end position="2241"/>
    </location>
</feature>
<feature type="region of interest" description="Disordered" evidence="6">
    <location>
        <begin position="2354"/>
        <end position="2378"/>
    </location>
</feature>
<feature type="region of interest" description="Disordered" evidence="6">
    <location>
        <begin position="2467"/>
        <end position="2493"/>
    </location>
</feature>
<feature type="compositionally biased region" description="Polar residues" evidence="6">
    <location>
        <begin position="1"/>
        <end position="18"/>
    </location>
</feature>
<feature type="compositionally biased region" description="Polar residues" evidence="6">
    <location>
        <begin position="42"/>
        <end position="51"/>
    </location>
</feature>
<feature type="compositionally biased region" description="Polar residues" evidence="6">
    <location>
        <begin position="60"/>
        <end position="78"/>
    </location>
</feature>
<feature type="compositionally biased region" description="Polar residues" evidence="6">
    <location>
        <begin position="129"/>
        <end position="147"/>
    </location>
</feature>
<feature type="compositionally biased region" description="Polar residues" evidence="6">
    <location>
        <begin position="197"/>
        <end position="210"/>
    </location>
</feature>
<feature type="compositionally biased region" description="Low complexity" evidence="6">
    <location>
        <begin position="211"/>
        <end position="233"/>
    </location>
</feature>
<feature type="compositionally biased region" description="Polar residues" evidence="6">
    <location>
        <begin position="234"/>
        <end position="246"/>
    </location>
</feature>
<feature type="compositionally biased region" description="Polar residues" evidence="6">
    <location>
        <begin position="253"/>
        <end position="264"/>
    </location>
</feature>
<feature type="compositionally biased region" description="Basic residues" evidence="6">
    <location>
        <begin position="287"/>
        <end position="303"/>
    </location>
</feature>
<feature type="compositionally biased region" description="Basic residues" evidence="6">
    <location>
        <begin position="404"/>
        <end position="422"/>
    </location>
</feature>
<feature type="compositionally biased region" description="Basic and acidic residues" evidence="6">
    <location>
        <begin position="425"/>
        <end position="434"/>
    </location>
</feature>
<feature type="compositionally biased region" description="Polar residues" evidence="6">
    <location>
        <begin position="500"/>
        <end position="525"/>
    </location>
</feature>
<feature type="compositionally biased region" description="Low complexity" evidence="6">
    <location>
        <begin position="534"/>
        <end position="555"/>
    </location>
</feature>
<feature type="compositionally biased region" description="Basic and acidic residues" evidence="6">
    <location>
        <begin position="630"/>
        <end position="640"/>
    </location>
</feature>
<feature type="compositionally biased region" description="Polar residues" evidence="6">
    <location>
        <begin position="641"/>
        <end position="660"/>
    </location>
</feature>
<feature type="compositionally biased region" description="Acidic residues" evidence="6">
    <location>
        <begin position="754"/>
        <end position="763"/>
    </location>
</feature>
<feature type="compositionally biased region" description="Low complexity" evidence="6">
    <location>
        <begin position="780"/>
        <end position="791"/>
    </location>
</feature>
<feature type="compositionally biased region" description="Low complexity" evidence="6">
    <location>
        <begin position="854"/>
        <end position="870"/>
    </location>
</feature>
<feature type="compositionally biased region" description="Polar residues" evidence="6">
    <location>
        <begin position="913"/>
        <end position="935"/>
    </location>
</feature>
<feature type="compositionally biased region" description="Polar residues" evidence="6">
    <location>
        <begin position="2470"/>
        <end position="2485"/>
    </location>
</feature>
<feature type="binding site" evidence="2">
    <location>
        <position position="2063"/>
    </location>
    <ligand>
        <name>Mg(2+)</name>
        <dbReference type="ChEBI" id="CHEBI:18420"/>
    </ligand>
</feature>
<feature type="binding site" evidence="2">
    <location>
        <position position="2105"/>
    </location>
    <ligand>
        <name>Mg(2+)</name>
        <dbReference type="ChEBI" id="CHEBI:18420"/>
    </ligand>
</feature>
<organism>
    <name type="scientific">Mycosarcoma maydis</name>
    <name type="common">Corn smut fungus</name>
    <name type="synonym">Ustilago maydis</name>
    <dbReference type="NCBI Taxonomy" id="5270"/>
    <lineage>
        <taxon>Eukaryota</taxon>
        <taxon>Fungi</taxon>
        <taxon>Dikarya</taxon>
        <taxon>Basidiomycota</taxon>
        <taxon>Ustilaginomycotina</taxon>
        <taxon>Ustilaginomycetes</taxon>
        <taxon>Ustilaginales</taxon>
        <taxon>Ustilaginaceae</taxon>
        <taxon>Mycosarcoma</taxon>
    </lineage>
</organism>
<evidence type="ECO:0000250" key="1"/>
<evidence type="ECO:0000250" key="2">
    <source>
        <dbReference type="UniProtKB" id="Q99280"/>
    </source>
</evidence>
<evidence type="ECO:0000255" key="3">
    <source>
        <dbReference type="PROSITE-ProRule" id="PRU00099"/>
    </source>
</evidence>
<evidence type="ECO:0000255" key="4">
    <source>
        <dbReference type="PROSITE-ProRule" id="PRU00166"/>
    </source>
</evidence>
<evidence type="ECO:0000255" key="5">
    <source>
        <dbReference type="PROSITE-ProRule" id="PRU01082"/>
    </source>
</evidence>
<evidence type="ECO:0000256" key="6">
    <source>
        <dbReference type="SAM" id="MobiDB-lite"/>
    </source>
</evidence>
<evidence type="ECO:0000305" key="7"/>
<reference key="1">
    <citation type="journal article" date="1994" name="Genes Dev.">
        <title>cAMP regulates morphogenesis in the fungal pathogen Ustilago maydis.</title>
        <authorList>
            <person name="Gold S."/>
            <person name="Duncan G."/>
            <person name="Barrett K."/>
            <person name="Kronstad J.W."/>
        </authorList>
    </citation>
    <scope>NUCLEOTIDE SEQUENCE [GENOMIC DNA]</scope>
    <source>
        <strain>518</strain>
    </source>
</reference>
<reference key="2">
    <citation type="journal article" date="2006" name="Nature">
        <title>Insights from the genome of the biotrophic fungal plant pathogen Ustilago maydis.</title>
        <authorList>
            <person name="Kaemper J."/>
            <person name="Kahmann R."/>
            <person name="Boelker M."/>
            <person name="Ma L.-J."/>
            <person name="Brefort T."/>
            <person name="Saville B.J."/>
            <person name="Banuett F."/>
            <person name="Kronstad J.W."/>
            <person name="Gold S.E."/>
            <person name="Mueller O."/>
            <person name="Perlin M.H."/>
            <person name="Woesten H.A.B."/>
            <person name="de Vries R."/>
            <person name="Ruiz-Herrera J."/>
            <person name="Reynaga-Pena C.G."/>
            <person name="Snetselaar K."/>
            <person name="McCann M."/>
            <person name="Perez-Martin J."/>
            <person name="Feldbruegge M."/>
            <person name="Basse C.W."/>
            <person name="Steinberg G."/>
            <person name="Ibeas J.I."/>
            <person name="Holloman W."/>
            <person name="Guzman P."/>
            <person name="Farman M.L."/>
            <person name="Stajich J.E."/>
            <person name="Sentandreu R."/>
            <person name="Gonzalez-Prieto J.M."/>
            <person name="Kennell J.C."/>
            <person name="Molina L."/>
            <person name="Schirawski J."/>
            <person name="Mendoza-Mendoza A."/>
            <person name="Greilinger D."/>
            <person name="Muench K."/>
            <person name="Roessel N."/>
            <person name="Scherer M."/>
            <person name="Vranes M."/>
            <person name="Ladendorf O."/>
            <person name="Vincon V."/>
            <person name="Fuchs U."/>
            <person name="Sandrock B."/>
            <person name="Meng S."/>
            <person name="Ho E.C.H."/>
            <person name="Cahill M.J."/>
            <person name="Boyce K.J."/>
            <person name="Klose J."/>
            <person name="Klosterman S.J."/>
            <person name="Deelstra H.J."/>
            <person name="Ortiz-Castellanos L."/>
            <person name="Li W."/>
            <person name="Sanchez-Alonso P."/>
            <person name="Schreier P.H."/>
            <person name="Haeuser-Hahn I."/>
            <person name="Vaupel M."/>
            <person name="Koopmann E."/>
            <person name="Friedrich G."/>
            <person name="Voss H."/>
            <person name="Schlueter T."/>
            <person name="Margolis J."/>
            <person name="Platt D."/>
            <person name="Swimmer C."/>
            <person name="Gnirke A."/>
            <person name="Chen F."/>
            <person name="Vysotskaia V."/>
            <person name="Mannhaupt G."/>
            <person name="Gueldener U."/>
            <person name="Muensterkoetter M."/>
            <person name="Haase D."/>
            <person name="Oesterheld M."/>
            <person name="Mewes H.-W."/>
            <person name="Mauceli E.W."/>
            <person name="DeCaprio D."/>
            <person name="Wade C.M."/>
            <person name="Butler J."/>
            <person name="Young S.K."/>
            <person name="Jaffe D.B."/>
            <person name="Calvo S.E."/>
            <person name="Nusbaum C."/>
            <person name="Galagan J.E."/>
            <person name="Birren B.W."/>
        </authorList>
    </citation>
    <scope>NUCLEOTIDE SEQUENCE [LARGE SCALE GENOMIC DNA]</scope>
    <source>
        <strain>DSM 14603 / FGSC 9021 / UM521</strain>
    </source>
</reference>
<reference key="3">
    <citation type="submission" date="2014-09" db="EMBL/GenBank/DDBJ databases">
        <authorList>
            <person name="Gueldener U."/>
            <person name="Muensterkoetter M."/>
            <person name="Walter M.C."/>
            <person name="Mannhaupt G."/>
            <person name="Kahmann R."/>
        </authorList>
    </citation>
    <scope>GENOME REANNOTATION</scope>
    <source>
        <strain>DSM 14603 / FGSC 9021 / UM521</strain>
    </source>
</reference>
<protein>
    <recommendedName>
        <fullName>Adenylate cyclase</fullName>
        <ecNumber>4.6.1.1</ecNumber>
    </recommendedName>
    <alternativeName>
        <fullName>ATP pyrophosphate-lyase</fullName>
    </alternativeName>
    <alternativeName>
        <fullName>Adenylyl cyclase</fullName>
    </alternativeName>
</protein>
<dbReference type="EC" id="4.6.1.1"/>
<dbReference type="EMBL" id="L33918">
    <property type="protein sequence ID" value="AAA57469.1"/>
    <property type="molecule type" value="Genomic_DNA"/>
</dbReference>
<dbReference type="EMBL" id="CM003143">
    <property type="protein sequence ID" value="KIS70161.1"/>
    <property type="molecule type" value="Genomic_DNA"/>
</dbReference>
<dbReference type="PIR" id="A55481">
    <property type="entry name" value="A55481"/>
</dbReference>
<dbReference type="RefSeq" id="XP_011388269.1">
    <property type="nucleotide sequence ID" value="XM_011389967.1"/>
</dbReference>
<dbReference type="SMR" id="P49606"/>
<dbReference type="FunCoup" id="P49606">
    <property type="interactions" value="77"/>
</dbReference>
<dbReference type="STRING" id="237631.P49606"/>
<dbReference type="EnsemblFungi" id="KIS70161">
    <property type="protein sequence ID" value="KIS70161"/>
    <property type="gene ID" value="UMAG_05232"/>
</dbReference>
<dbReference type="GeneID" id="23565179"/>
<dbReference type="KEGG" id="uma:UMAG_05232"/>
<dbReference type="VEuPathDB" id="FungiDB:UMAG_05232"/>
<dbReference type="eggNOG" id="KOG0618">
    <property type="taxonomic scope" value="Eukaryota"/>
</dbReference>
<dbReference type="HOGENOM" id="CLU_000430_0_0_1"/>
<dbReference type="InParanoid" id="P49606"/>
<dbReference type="OMA" id="CESLAHI"/>
<dbReference type="OrthoDB" id="2021138at2759"/>
<dbReference type="PHI-base" id="PHI:22"/>
<dbReference type="Proteomes" id="UP000000561">
    <property type="component" value="Chromosome 4"/>
</dbReference>
<dbReference type="GO" id="GO:0004016">
    <property type="term" value="F:adenylate cyclase activity"/>
    <property type="evidence" value="ECO:0007669"/>
    <property type="project" value="UniProtKB-EC"/>
</dbReference>
<dbReference type="GO" id="GO:0005524">
    <property type="term" value="F:ATP binding"/>
    <property type="evidence" value="ECO:0007669"/>
    <property type="project" value="UniProtKB-KW"/>
</dbReference>
<dbReference type="GO" id="GO:0046872">
    <property type="term" value="F:metal ion binding"/>
    <property type="evidence" value="ECO:0007669"/>
    <property type="project" value="UniProtKB-KW"/>
</dbReference>
<dbReference type="GO" id="GO:0006171">
    <property type="term" value="P:cAMP biosynthetic process"/>
    <property type="evidence" value="ECO:0007669"/>
    <property type="project" value="UniProtKB-KW"/>
</dbReference>
<dbReference type="GO" id="GO:0035556">
    <property type="term" value="P:intracellular signal transduction"/>
    <property type="evidence" value="ECO:0000318"/>
    <property type="project" value="GO_Central"/>
</dbReference>
<dbReference type="CDD" id="cd07302">
    <property type="entry name" value="CHD"/>
    <property type="match status" value="1"/>
</dbReference>
<dbReference type="CDD" id="cd00143">
    <property type="entry name" value="PP2Cc"/>
    <property type="match status" value="1"/>
</dbReference>
<dbReference type="CDD" id="cd17214">
    <property type="entry name" value="RA_CYR1_like"/>
    <property type="match status" value="1"/>
</dbReference>
<dbReference type="FunFam" id="3.80.10.10:FF:000408">
    <property type="entry name" value="Adenylate cyclase"/>
    <property type="match status" value="1"/>
</dbReference>
<dbReference type="FunFam" id="3.60.40.10:FF:000055">
    <property type="entry name" value="Adenylate cyclase AcyA"/>
    <property type="match status" value="1"/>
</dbReference>
<dbReference type="FunFam" id="3.80.10.10:FF:000220">
    <property type="entry name" value="Adenylate cyclase AcyA"/>
    <property type="match status" value="1"/>
</dbReference>
<dbReference type="Gene3D" id="3.30.70.1230">
    <property type="entry name" value="Nucleotide cyclase"/>
    <property type="match status" value="1"/>
</dbReference>
<dbReference type="Gene3D" id="3.60.40.10">
    <property type="entry name" value="PPM-type phosphatase domain"/>
    <property type="match status" value="1"/>
</dbReference>
<dbReference type="Gene3D" id="3.80.10.10">
    <property type="entry name" value="Ribonuclease Inhibitor"/>
    <property type="match status" value="4"/>
</dbReference>
<dbReference type="InterPro" id="IPR001054">
    <property type="entry name" value="A/G_cyclase"/>
</dbReference>
<dbReference type="InterPro" id="IPR001611">
    <property type="entry name" value="Leu-rich_rpt"/>
</dbReference>
<dbReference type="InterPro" id="IPR003591">
    <property type="entry name" value="Leu-rich_rpt_typical-subtyp"/>
</dbReference>
<dbReference type="InterPro" id="IPR032675">
    <property type="entry name" value="LRR_dom_sf"/>
</dbReference>
<dbReference type="InterPro" id="IPR050216">
    <property type="entry name" value="LRR_domain-containing"/>
</dbReference>
<dbReference type="InterPro" id="IPR029787">
    <property type="entry name" value="Nucleotide_cyclase"/>
</dbReference>
<dbReference type="InterPro" id="IPR036457">
    <property type="entry name" value="PPM-type-like_dom_sf"/>
</dbReference>
<dbReference type="InterPro" id="IPR001932">
    <property type="entry name" value="PPM-type_phosphatase-like_dom"/>
</dbReference>
<dbReference type="InterPro" id="IPR000159">
    <property type="entry name" value="RA_dom"/>
</dbReference>
<dbReference type="InterPro" id="IPR055071">
    <property type="entry name" value="RA_PHLPP-like"/>
</dbReference>
<dbReference type="PANTHER" id="PTHR48051">
    <property type="match status" value="1"/>
</dbReference>
<dbReference type="PANTHER" id="PTHR48051:SF1">
    <property type="entry name" value="RAS SUPPRESSOR PROTEIN 1"/>
    <property type="match status" value="1"/>
</dbReference>
<dbReference type="Pfam" id="PF00211">
    <property type="entry name" value="Guanylate_cyc"/>
    <property type="match status" value="1"/>
</dbReference>
<dbReference type="Pfam" id="PF13855">
    <property type="entry name" value="LRR_8"/>
    <property type="match status" value="4"/>
</dbReference>
<dbReference type="Pfam" id="PF00481">
    <property type="entry name" value="PP2C"/>
    <property type="match status" value="1"/>
</dbReference>
<dbReference type="Pfam" id="PF23010">
    <property type="entry name" value="RA_3"/>
    <property type="match status" value="1"/>
</dbReference>
<dbReference type="SMART" id="SM00044">
    <property type="entry name" value="CYCc"/>
    <property type="match status" value="1"/>
</dbReference>
<dbReference type="SMART" id="SM00364">
    <property type="entry name" value="LRR_BAC"/>
    <property type="match status" value="13"/>
</dbReference>
<dbReference type="SMART" id="SM00365">
    <property type="entry name" value="LRR_SD22"/>
    <property type="match status" value="6"/>
</dbReference>
<dbReference type="SMART" id="SM00369">
    <property type="entry name" value="LRR_TYP"/>
    <property type="match status" value="12"/>
</dbReference>
<dbReference type="SMART" id="SM00332">
    <property type="entry name" value="PP2Cc"/>
    <property type="match status" value="1"/>
</dbReference>
<dbReference type="SUPFAM" id="SSF52058">
    <property type="entry name" value="L domain-like"/>
    <property type="match status" value="3"/>
</dbReference>
<dbReference type="SUPFAM" id="SSF55073">
    <property type="entry name" value="Nucleotide cyclase"/>
    <property type="match status" value="1"/>
</dbReference>
<dbReference type="SUPFAM" id="SSF81606">
    <property type="entry name" value="PP2C-like"/>
    <property type="match status" value="1"/>
</dbReference>
<dbReference type="PROSITE" id="PS50125">
    <property type="entry name" value="GUANYLATE_CYCLASE_2"/>
    <property type="match status" value="1"/>
</dbReference>
<dbReference type="PROSITE" id="PS51450">
    <property type="entry name" value="LRR"/>
    <property type="match status" value="18"/>
</dbReference>
<dbReference type="PROSITE" id="PS51746">
    <property type="entry name" value="PPM_2"/>
    <property type="match status" value="1"/>
</dbReference>
<dbReference type="PROSITE" id="PS50200">
    <property type="entry name" value="RA"/>
    <property type="match status" value="1"/>
</dbReference>
<keyword id="KW-0067">ATP-binding</keyword>
<keyword id="KW-0115">cAMP biosynthesis</keyword>
<keyword id="KW-0433">Leucine-rich repeat</keyword>
<keyword id="KW-0456">Lyase</keyword>
<keyword id="KW-0460">Magnesium</keyword>
<keyword id="KW-0479">Metal-binding</keyword>
<keyword id="KW-0547">Nucleotide-binding</keyword>
<keyword id="KW-1185">Reference proteome</keyword>
<keyword id="KW-0677">Repeat</keyword>
<accession>P49606</accession>
<accession>A0A0D1E2W9</accession>
<accession>Q4P3T1</accession>
<gene>
    <name type="primary">UAC1</name>
    <name type="synonym">REM1</name>
    <name type="ORF">UMAG_05232</name>
</gene>
<comment type="function">
    <text>Plays essential roles in regulation of cellular metabolism by catalyzing the synthesis of a second messenger, cAMP.</text>
</comment>
<comment type="catalytic activity">
    <reaction>
        <text>ATP = 3',5'-cyclic AMP + diphosphate</text>
        <dbReference type="Rhea" id="RHEA:15389"/>
        <dbReference type="ChEBI" id="CHEBI:30616"/>
        <dbReference type="ChEBI" id="CHEBI:33019"/>
        <dbReference type="ChEBI" id="CHEBI:58165"/>
        <dbReference type="EC" id="4.6.1.1"/>
    </reaction>
</comment>
<comment type="cofactor">
    <cofactor evidence="1">
        <name>Mg(2+)</name>
        <dbReference type="ChEBI" id="CHEBI:18420"/>
    </cofactor>
    <text evidence="1">Binds 1 Mg(2+) ion per subunit.</text>
</comment>
<comment type="similarity">
    <text evidence="7">Belongs to the adenylyl cyclase class-3 family.</text>
</comment>